<proteinExistence type="inferred from homology"/>
<keyword id="KW-0963">Cytoplasm</keyword>
<keyword id="KW-0227">DNA damage</keyword>
<keyword id="KW-0233">DNA recombination</keyword>
<keyword id="KW-0234">DNA repair</keyword>
<keyword id="KW-0238">DNA-binding</keyword>
<feature type="chain" id="PRO_0000224854" description="Holliday junction branch migration complex subunit RuvA">
    <location>
        <begin position="1"/>
        <end position="200"/>
    </location>
</feature>
<feature type="region of interest" description="Domain I" evidence="1">
    <location>
        <begin position="1"/>
        <end position="65"/>
    </location>
</feature>
<feature type="region of interest" description="Domain II" evidence="1">
    <location>
        <begin position="66"/>
        <end position="144"/>
    </location>
</feature>
<feature type="region of interest" description="Flexible linker" evidence="1">
    <location>
        <begin position="145"/>
        <end position="149"/>
    </location>
</feature>
<feature type="region of interest" description="Domain III" evidence="1">
    <location>
        <begin position="150"/>
        <end position="200"/>
    </location>
</feature>
<name>RUVA_CHLTA</name>
<dbReference type="EMBL" id="CP000051">
    <property type="protein sequence ID" value="AAX50776.1"/>
    <property type="molecule type" value="Genomic_DNA"/>
</dbReference>
<dbReference type="RefSeq" id="WP_011324755.1">
    <property type="nucleotide sequence ID" value="NC_007429.1"/>
</dbReference>
<dbReference type="SMR" id="Q3KLJ6"/>
<dbReference type="KEGG" id="cta:CTA_0549"/>
<dbReference type="HOGENOM" id="CLU_087936_3_0_0"/>
<dbReference type="Proteomes" id="UP000002532">
    <property type="component" value="Chromosome"/>
</dbReference>
<dbReference type="GO" id="GO:0005737">
    <property type="term" value="C:cytoplasm"/>
    <property type="evidence" value="ECO:0007669"/>
    <property type="project" value="UniProtKB-SubCell"/>
</dbReference>
<dbReference type="GO" id="GO:0009379">
    <property type="term" value="C:Holliday junction helicase complex"/>
    <property type="evidence" value="ECO:0007669"/>
    <property type="project" value="InterPro"/>
</dbReference>
<dbReference type="GO" id="GO:0048476">
    <property type="term" value="C:Holliday junction resolvase complex"/>
    <property type="evidence" value="ECO:0007669"/>
    <property type="project" value="UniProtKB-UniRule"/>
</dbReference>
<dbReference type="GO" id="GO:0005524">
    <property type="term" value="F:ATP binding"/>
    <property type="evidence" value="ECO:0007669"/>
    <property type="project" value="InterPro"/>
</dbReference>
<dbReference type="GO" id="GO:0000400">
    <property type="term" value="F:four-way junction DNA binding"/>
    <property type="evidence" value="ECO:0007669"/>
    <property type="project" value="UniProtKB-UniRule"/>
</dbReference>
<dbReference type="GO" id="GO:0009378">
    <property type="term" value="F:four-way junction helicase activity"/>
    <property type="evidence" value="ECO:0007669"/>
    <property type="project" value="InterPro"/>
</dbReference>
<dbReference type="GO" id="GO:0006310">
    <property type="term" value="P:DNA recombination"/>
    <property type="evidence" value="ECO:0007669"/>
    <property type="project" value="UniProtKB-UniRule"/>
</dbReference>
<dbReference type="GO" id="GO:0006281">
    <property type="term" value="P:DNA repair"/>
    <property type="evidence" value="ECO:0007669"/>
    <property type="project" value="UniProtKB-UniRule"/>
</dbReference>
<dbReference type="CDD" id="cd14332">
    <property type="entry name" value="UBA_RuvA_C"/>
    <property type="match status" value="1"/>
</dbReference>
<dbReference type="Gene3D" id="1.10.150.20">
    <property type="entry name" value="5' to 3' exonuclease, C-terminal subdomain"/>
    <property type="match status" value="1"/>
</dbReference>
<dbReference type="Gene3D" id="1.10.8.10">
    <property type="entry name" value="DNA helicase RuvA subunit, C-terminal domain"/>
    <property type="match status" value="1"/>
</dbReference>
<dbReference type="Gene3D" id="2.40.50.140">
    <property type="entry name" value="Nucleic acid-binding proteins"/>
    <property type="match status" value="1"/>
</dbReference>
<dbReference type="HAMAP" id="MF_00031">
    <property type="entry name" value="DNA_HJ_migration_RuvA"/>
    <property type="match status" value="1"/>
</dbReference>
<dbReference type="InterPro" id="IPR013849">
    <property type="entry name" value="DNA_helicase_Holl-junc_RuvA_I"/>
</dbReference>
<dbReference type="InterPro" id="IPR003583">
    <property type="entry name" value="Hlx-hairpin-Hlx_DNA-bd_motif"/>
</dbReference>
<dbReference type="InterPro" id="IPR012340">
    <property type="entry name" value="NA-bd_OB-fold"/>
</dbReference>
<dbReference type="InterPro" id="IPR000085">
    <property type="entry name" value="RuvA"/>
</dbReference>
<dbReference type="InterPro" id="IPR010994">
    <property type="entry name" value="RuvA_2-like"/>
</dbReference>
<dbReference type="InterPro" id="IPR011114">
    <property type="entry name" value="RuvA_C"/>
</dbReference>
<dbReference type="NCBIfam" id="TIGR00084">
    <property type="entry name" value="ruvA"/>
    <property type="match status" value="1"/>
</dbReference>
<dbReference type="Pfam" id="PF14520">
    <property type="entry name" value="HHH_5"/>
    <property type="match status" value="1"/>
</dbReference>
<dbReference type="Pfam" id="PF01330">
    <property type="entry name" value="RuvA_N"/>
    <property type="match status" value="1"/>
</dbReference>
<dbReference type="SMART" id="SM00278">
    <property type="entry name" value="HhH1"/>
    <property type="match status" value="2"/>
</dbReference>
<dbReference type="SUPFAM" id="SSF50249">
    <property type="entry name" value="Nucleic acid-binding proteins"/>
    <property type="match status" value="1"/>
</dbReference>
<dbReference type="SUPFAM" id="SSF47781">
    <property type="entry name" value="RuvA domain 2-like"/>
    <property type="match status" value="1"/>
</dbReference>
<gene>
    <name evidence="1" type="primary">ruvA</name>
    <name type="ordered locus">CTA_0549</name>
</gene>
<sequence>MYEYIKGTLTHINESYVVIESFGIGYAIMLSERFSVDLRAFMHQEVLIYVHSVIRETEHVLYGFSSRAEKECFRLLISFSGIGPKTGLSILNMFPLQELCSIARLENVKAIASVPGIGKKTAEKLMVDLKQKLPTLMPLYLEEPVVPSSTANSSFKEGIGALMNLGFSRLAADRMMTEAVKELSEEASVAELLPIALRKS</sequence>
<organism>
    <name type="scientific">Chlamydia trachomatis serovar A (strain ATCC VR-571B / DSM 19440 / HAR-13)</name>
    <dbReference type="NCBI Taxonomy" id="315277"/>
    <lineage>
        <taxon>Bacteria</taxon>
        <taxon>Pseudomonadati</taxon>
        <taxon>Chlamydiota</taxon>
        <taxon>Chlamydiia</taxon>
        <taxon>Chlamydiales</taxon>
        <taxon>Chlamydiaceae</taxon>
        <taxon>Chlamydia/Chlamydophila group</taxon>
        <taxon>Chlamydia</taxon>
    </lineage>
</organism>
<evidence type="ECO:0000255" key="1">
    <source>
        <dbReference type="HAMAP-Rule" id="MF_00031"/>
    </source>
</evidence>
<protein>
    <recommendedName>
        <fullName evidence="1">Holliday junction branch migration complex subunit RuvA</fullName>
    </recommendedName>
</protein>
<comment type="function">
    <text evidence="1">The RuvA-RuvB-RuvC complex processes Holliday junction (HJ) DNA during genetic recombination and DNA repair, while the RuvA-RuvB complex plays an important role in the rescue of blocked DNA replication forks via replication fork reversal (RFR). RuvA specifically binds to HJ cruciform DNA, conferring on it an open structure. The RuvB hexamer acts as an ATP-dependent pump, pulling dsDNA into and through the RuvAB complex. HJ branch migration allows RuvC to scan DNA until it finds its consensus sequence, where it cleaves and resolves the cruciform DNA.</text>
</comment>
<comment type="subunit">
    <text evidence="1">Homotetramer. Forms an RuvA(8)-RuvB(12)-Holliday junction (HJ) complex. HJ DNA is sandwiched between 2 RuvA tetramers; dsDNA enters through RuvA and exits via RuvB. An RuvB hexamer assembles on each DNA strand where it exits the tetramer. Each RuvB hexamer is contacted by two RuvA subunits (via domain III) on 2 adjacent RuvB subunits; this complex drives branch migration. In the full resolvosome a probable DNA-RuvA(4)-RuvB(12)-RuvC(2) complex forms which resolves the HJ.</text>
</comment>
<comment type="subcellular location">
    <subcellularLocation>
        <location evidence="1">Cytoplasm</location>
    </subcellularLocation>
</comment>
<comment type="domain">
    <text evidence="1">Has three domains with a flexible linker between the domains II and III and assumes an 'L' shape. Domain III is highly mobile and contacts RuvB.</text>
</comment>
<comment type="similarity">
    <text evidence="1">Belongs to the RuvA family.</text>
</comment>
<reference key="1">
    <citation type="journal article" date="2005" name="Infect. Immun.">
        <title>Comparative genomic analysis of Chlamydia trachomatis oculotropic and genitotropic strains.</title>
        <authorList>
            <person name="Carlson J.H."/>
            <person name="Porcella S.F."/>
            <person name="McClarty G."/>
            <person name="Caldwell H.D."/>
        </authorList>
    </citation>
    <scope>NUCLEOTIDE SEQUENCE [LARGE SCALE GENOMIC DNA]</scope>
    <source>
        <strain>ATCC VR-571B / DSM 19440 / HAR-13</strain>
    </source>
</reference>
<accession>Q3KLJ6</accession>